<feature type="chain" id="PRO_0000207341" description="Urocanate hydratase">
    <location>
        <begin position="1"/>
        <end position="9" status="greater than"/>
    </location>
</feature>
<feature type="non-terminal residue">
    <location>
        <position position="9"/>
    </location>
</feature>
<protein>
    <recommendedName>
        <fullName>Urocanate hydratase</fullName>
        <shortName>Urocanase</shortName>
        <ecNumber>4.2.1.49</ecNumber>
    </recommendedName>
    <alternativeName>
        <fullName>Imidazolonepropionate hydrolase</fullName>
    </alternativeName>
</protein>
<comment type="function">
    <text evidence="1">Catalyzes the conversion of urocanate to 4-imidazolone-5-propionate.</text>
</comment>
<comment type="catalytic activity">
    <reaction>
        <text>4-imidazolone-5-propanoate = trans-urocanate + H2O</text>
        <dbReference type="Rhea" id="RHEA:13101"/>
        <dbReference type="ChEBI" id="CHEBI:15377"/>
        <dbReference type="ChEBI" id="CHEBI:17771"/>
        <dbReference type="ChEBI" id="CHEBI:77893"/>
        <dbReference type="EC" id="4.2.1.49"/>
    </reaction>
</comment>
<comment type="cofactor">
    <cofactor evidence="1">
        <name>NAD(+)</name>
        <dbReference type="ChEBI" id="CHEBI:57540"/>
    </cofactor>
    <text evidence="1">Binds 1 NAD(+) per subunit.</text>
</comment>
<comment type="pathway">
    <text>Amino-acid degradation; L-histidine degradation into L-glutamate; N-formimidoyl-L-glutamate from L-histidine: step 2/3.</text>
</comment>
<comment type="subcellular location">
    <subcellularLocation>
        <location evidence="1">Cytoplasm</location>
    </subcellularLocation>
</comment>
<comment type="similarity">
    <text evidence="2">Belongs to the urocanase family.</text>
</comment>
<name>HUTU_KLEAE</name>
<accession>P12381</accession>
<proteinExistence type="inferred from homology"/>
<evidence type="ECO:0000250" key="1"/>
<evidence type="ECO:0000305" key="2"/>
<organism>
    <name type="scientific">Klebsiella aerogenes</name>
    <name type="common">Enterobacter aerogenes</name>
    <dbReference type="NCBI Taxonomy" id="548"/>
    <lineage>
        <taxon>Bacteria</taxon>
        <taxon>Pseudomonadati</taxon>
        <taxon>Pseudomonadota</taxon>
        <taxon>Gammaproteobacteria</taxon>
        <taxon>Enterobacterales</taxon>
        <taxon>Enterobacteriaceae</taxon>
        <taxon>Klebsiella/Raoultella group</taxon>
        <taxon>Klebsiella</taxon>
    </lineage>
</organism>
<sequence length="9" mass="1140">MSQSKYRQL</sequence>
<gene>
    <name type="primary">hutU</name>
</gene>
<reference key="1">
    <citation type="journal article" date="1988" name="J. Bacteriol.">
        <title>Bidirectional promoter in the hut(P) region of the histidine utilization (hut) operons from Klebsiella aerogenes.</title>
        <authorList>
            <person name="Nieuwkoop A.J."/>
            <person name="Baldauf S.A."/>
            <person name="Hudspeth M.E.S."/>
            <person name="Bender R.A."/>
        </authorList>
    </citation>
    <scope>NUCLEOTIDE SEQUENCE [GENOMIC DNA]</scope>
</reference>
<reference key="2">
    <citation type="journal article" date="1990" name="J. Bacteriol.">
        <title>Nucleotide sequence of the gene encoding the repressor for the histidine utilization genes of Klebsiella aerogenes.</title>
        <authorList>
            <person name="Schwacha A."/>
            <person name="Bender R.A."/>
        </authorList>
    </citation>
    <scope>NUCLEOTIDE SEQUENCE [GENOMIC DNA]</scope>
</reference>
<dbReference type="EC" id="4.2.1.49"/>
<dbReference type="EMBL" id="M19665">
    <property type="protein sequence ID" value="AAA25078.1"/>
    <property type="molecule type" value="Genomic_DNA"/>
</dbReference>
<dbReference type="EMBL" id="M34604">
    <property type="protein sequence ID" value="AAA25076.1"/>
    <property type="molecule type" value="Genomic_DNA"/>
</dbReference>
<dbReference type="UniPathway" id="UPA00379">
    <property type="reaction ID" value="UER00550"/>
</dbReference>
<dbReference type="GO" id="GO:0005737">
    <property type="term" value="C:cytoplasm"/>
    <property type="evidence" value="ECO:0007669"/>
    <property type="project" value="UniProtKB-SubCell"/>
</dbReference>
<dbReference type="GO" id="GO:0016153">
    <property type="term" value="F:urocanate hydratase activity"/>
    <property type="evidence" value="ECO:0007669"/>
    <property type="project" value="UniProtKB-EC"/>
</dbReference>
<dbReference type="GO" id="GO:0019556">
    <property type="term" value="P:L-histidine catabolic process to glutamate and formamide"/>
    <property type="evidence" value="ECO:0007669"/>
    <property type="project" value="UniProtKB-UniPathway"/>
</dbReference>
<dbReference type="GO" id="GO:0019557">
    <property type="term" value="P:L-histidine catabolic process to glutamate and formate"/>
    <property type="evidence" value="ECO:0007669"/>
    <property type="project" value="UniProtKB-UniPathway"/>
</dbReference>
<keyword id="KW-0963">Cytoplasm</keyword>
<keyword id="KW-0369">Histidine metabolism</keyword>
<keyword id="KW-0456">Lyase</keyword>
<keyword id="KW-0520">NAD</keyword>